<dbReference type="EC" id="2.3.1.275" evidence="1"/>
<dbReference type="EMBL" id="CP000230">
    <property type="protein sequence ID" value="ABC23987.1"/>
    <property type="molecule type" value="Genomic_DNA"/>
</dbReference>
<dbReference type="RefSeq" id="WP_011390940.1">
    <property type="nucleotide sequence ID" value="NC_007643.1"/>
</dbReference>
<dbReference type="RefSeq" id="YP_428274.1">
    <property type="nucleotide sequence ID" value="NC_007643.1"/>
</dbReference>
<dbReference type="SMR" id="Q2RPF8"/>
<dbReference type="STRING" id="269796.Rru_A3192"/>
<dbReference type="EnsemblBacteria" id="ABC23987">
    <property type="protein sequence ID" value="ABC23987"/>
    <property type="gene ID" value="Rru_A3192"/>
</dbReference>
<dbReference type="KEGG" id="rru:Rru_A3192"/>
<dbReference type="PATRIC" id="fig|269796.9.peg.3305"/>
<dbReference type="eggNOG" id="COG0344">
    <property type="taxonomic scope" value="Bacteria"/>
</dbReference>
<dbReference type="HOGENOM" id="CLU_081254_1_0_5"/>
<dbReference type="PhylomeDB" id="Q2RPF8"/>
<dbReference type="UniPathway" id="UPA00085"/>
<dbReference type="Proteomes" id="UP000001929">
    <property type="component" value="Chromosome"/>
</dbReference>
<dbReference type="GO" id="GO:0005886">
    <property type="term" value="C:plasma membrane"/>
    <property type="evidence" value="ECO:0007669"/>
    <property type="project" value="UniProtKB-SubCell"/>
</dbReference>
<dbReference type="GO" id="GO:0043772">
    <property type="term" value="F:acyl-phosphate glycerol-3-phosphate acyltransferase activity"/>
    <property type="evidence" value="ECO:0007669"/>
    <property type="project" value="UniProtKB-UniRule"/>
</dbReference>
<dbReference type="GO" id="GO:0008654">
    <property type="term" value="P:phospholipid biosynthetic process"/>
    <property type="evidence" value="ECO:0007669"/>
    <property type="project" value="UniProtKB-UniRule"/>
</dbReference>
<dbReference type="HAMAP" id="MF_01043">
    <property type="entry name" value="PlsY"/>
    <property type="match status" value="1"/>
</dbReference>
<dbReference type="InterPro" id="IPR003811">
    <property type="entry name" value="G3P_acylTferase_PlsY"/>
</dbReference>
<dbReference type="NCBIfam" id="TIGR00023">
    <property type="entry name" value="glycerol-3-phosphate 1-O-acyltransferase PlsY"/>
    <property type="match status" value="1"/>
</dbReference>
<dbReference type="PANTHER" id="PTHR30309:SF0">
    <property type="entry name" value="GLYCEROL-3-PHOSPHATE ACYLTRANSFERASE-RELATED"/>
    <property type="match status" value="1"/>
</dbReference>
<dbReference type="PANTHER" id="PTHR30309">
    <property type="entry name" value="INNER MEMBRANE PROTEIN YGIH"/>
    <property type="match status" value="1"/>
</dbReference>
<dbReference type="Pfam" id="PF02660">
    <property type="entry name" value="G3P_acyltransf"/>
    <property type="match status" value="1"/>
</dbReference>
<dbReference type="SMART" id="SM01207">
    <property type="entry name" value="G3P_acyltransf"/>
    <property type="match status" value="1"/>
</dbReference>
<sequence length="216" mass="21728">MADLSTLMPALVLGVCALAGYLLGSVPFGLVLVRLAGLGDVRGIGSGNIGATNVLRTGRKDLALATLVLDSGKGAIAALVASALASRIAGFEDAVLAGLLAGGMAVVGHNFPIWLGFKGGKGVATTLGTLLATAWPVGLAACATWLVVAALFRYSSLAALVCLALAPAYALVLATPAHAAVFALLALLAWIRHRANIARLLKGEESRIGAKKKAAP</sequence>
<accession>Q2RPF8</accession>
<proteinExistence type="inferred from homology"/>
<gene>
    <name evidence="1" type="primary">plsY</name>
    <name type="ordered locus">Rru_A3192</name>
</gene>
<comment type="function">
    <text evidence="1">Catalyzes the transfer of an acyl group from acyl-phosphate (acyl-PO(4)) to glycerol-3-phosphate (G3P) to form lysophosphatidic acid (LPA). This enzyme utilizes acyl-phosphate as fatty acyl donor, but not acyl-CoA or acyl-ACP.</text>
</comment>
<comment type="catalytic activity">
    <reaction evidence="1">
        <text>an acyl phosphate + sn-glycerol 3-phosphate = a 1-acyl-sn-glycero-3-phosphate + phosphate</text>
        <dbReference type="Rhea" id="RHEA:34075"/>
        <dbReference type="ChEBI" id="CHEBI:43474"/>
        <dbReference type="ChEBI" id="CHEBI:57597"/>
        <dbReference type="ChEBI" id="CHEBI:57970"/>
        <dbReference type="ChEBI" id="CHEBI:59918"/>
        <dbReference type="EC" id="2.3.1.275"/>
    </reaction>
</comment>
<comment type="pathway">
    <text evidence="1">Lipid metabolism; phospholipid metabolism.</text>
</comment>
<comment type="subunit">
    <text evidence="1">Probably interacts with PlsX.</text>
</comment>
<comment type="subcellular location">
    <subcellularLocation>
        <location evidence="1">Cell inner membrane</location>
        <topology evidence="1">Multi-pass membrane protein</topology>
    </subcellularLocation>
</comment>
<comment type="similarity">
    <text evidence="1">Belongs to the PlsY family.</text>
</comment>
<name>PLSY_RHORT</name>
<keyword id="KW-0997">Cell inner membrane</keyword>
<keyword id="KW-1003">Cell membrane</keyword>
<keyword id="KW-0444">Lipid biosynthesis</keyword>
<keyword id="KW-0443">Lipid metabolism</keyword>
<keyword id="KW-0472">Membrane</keyword>
<keyword id="KW-0594">Phospholipid biosynthesis</keyword>
<keyword id="KW-1208">Phospholipid metabolism</keyword>
<keyword id="KW-1185">Reference proteome</keyword>
<keyword id="KW-0808">Transferase</keyword>
<keyword id="KW-0812">Transmembrane</keyword>
<keyword id="KW-1133">Transmembrane helix</keyword>
<evidence type="ECO:0000255" key="1">
    <source>
        <dbReference type="HAMAP-Rule" id="MF_01043"/>
    </source>
</evidence>
<feature type="chain" id="PRO_0000250327" description="Glycerol-3-phosphate acyltransferase">
    <location>
        <begin position="1"/>
        <end position="216"/>
    </location>
</feature>
<feature type="transmembrane region" description="Helical" evidence="1">
    <location>
        <begin position="11"/>
        <end position="31"/>
    </location>
</feature>
<feature type="transmembrane region" description="Helical" evidence="1">
    <location>
        <begin position="62"/>
        <end position="82"/>
    </location>
</feature>
<feature type="transmembrane region" description="Helical" evidence="1">
    <location>
        <begin position="95"/>
        <end position="115"/>
    </location>
</feature>
<feature type="transmembrane region" description="Helical" evidence="1">
    <location>
        <begin position="132"/>
        <end position="152"/>
    </location>
</feature>
<feature type="transmembrane region" description="Helical" evidence="1">
    <location>
        <begin position="171"/>
        <end position="191"/>
    </location>
</feature>
<reference key="1">
    <citation type="journal article" date="2011" name="Stand. Genomic Sci.">
        <title>Complete genome sequence of Rhodospirillum rubrum type strain (S1).</title>
        <authorList>
            <person name="Munk A.C."/>
            <person name="Copeland A."/>
            <person name="Lucas S."/>
            <person name="Lapidus A."/>
            <person name="Del Rio T.G."/>
            <person name="Barry K."/>
            <person name="Detter J.C."/>
            <person name="Hammon N."/>
            <person name="Israni S."/>
            <person name="Pitluck S."/>
            <person name="Brettin T."/>
            <person name="Bruce D."/>
            <person name="Han C."/>
            <person name="Tapia R."/>
            <person name="Gilna P."/>
            <person name="Schmutz J."/>
            <person name="Larimer F."/>
            <person name="Land M."/>
            <person name="Kyrpides N.C."/>
            <person name="Mavromatis K."/>
            <person name="Richardson P."/>
            <person name="Rohde M."/>
            <person name="Goeker M."/>
            <person name="Klenk H.P."/>
            <person name="Zhang Y."/>
            <person name="Roberts G.P."/>
            <person name="Reslewic S."/>
            <person name="Schwartz D.C."/>
        </authorList>
    </citation>
    <scope>NUCLEOTIDE SEQUENCE [LARGE SCALE GENOMIC DNA]</scope>
    <source>
        <strain>ATCC 11170 / ATH 1.1.1 / DSM 467 / LMG 4362 / NCIMB 8255 / S1</strain>
    </source>
</reference>
<protein>
    <recommendedName>
        <fullName evidence="1">Glycerol-3-phosphate acyltransferase</fullName>
    </recommendedName>
    <alternativeName>
        <fullName evidence="1">Acyl-PO4 G3P acyltransferase</fullName>
    </alternativeName>
    <alternativeName>
        <fullName evidence="1">Acyl-phosphate--glycerol-3-phosphate acyltransferase</fullName>
    </alternativeName>
    <alternativeName>
        <fullName evidence="1">G3P acyltransferase</fullName>
        <shortName evidence="1">GPAT</shortName>
        <ecNumber evidence="1">2.3.1.275</ecNumber>
    </alternativeName>
    <alternativeName>
        <fullName evidence="1">Lysophosphatidic acid synthase</fullName>
        <shortName evidence="1">LPA synthase</shortName>
    </alternativeName>
</protein>
<organism>
    <name type="scientific">Rhodospirillum rubrum (strain ATCC 11170 / ATH 1.1.1 / DSM 467 / LMG 4362 / NCIMB 8255 / S1)</name>
    <dbReference type="NCBI Taxonomy" id="269796"/>
    <lineage>
        <taxon>Bacteria</taxon>
        <taxon>Pseudomonadati</taxon>
        <taxon>Pseudomonadota</taxon>
        <taxon>Alphaproteobacteria</taxon>
        <taxon>Rhodospirillales</taxon>
        <taxon>Rhodospirillaceae</taxon>
        <taxon>Rhodospirillum</taxon>
    </lineage>
</organism>